<protein>
    <recommendedName>
        <fullName evidence="1">Protein SprT-like</fullName>
    </recommendedName>
</protein>
<accession>Q63GW6</accession>
<comment type="cofactor">
    <cofactor evidence="1">
        <name>Zn(2+)</name>
        <dbReference type="ChEBI" id="CHEBI:29105"/>
    </cofactor>
    <text evidence="1">Binds 1 zinc ion.</text>
</comment>
<comment type="subcellular location">
    <subcellularLocation>
        <location evidence="1">Cytoplasm</location>
    </subcellularLocation>
</comment>
<comment type="similarity">
    <text evidence="1">Belongs to the SprT family.</text>
</comment>
<gene>
    <name type="ordered locus">BCE33L0230</name>
</gene>
<name>SPRTL_BACCZ</name>
<evidence type="ECO:0000255" key="1">
    <source>
        <dbReference type="HAMAP-Rule" id="MF_00745"/>
    </source>
</evidence>
<proteinExistence type="inferred from homology"/>
<reference key="1">
    <citation type="journal article" date="2006" name="J. Bacteriol.">
        <title>Pathogenomic sequence analysis of Bacillus cereus and Bacillus thuringiensis isolates closely related to Bacillus anthracis.</title>
        <authorList>
            <person name="Han C.S."/>
            <person name="Xie G."/>
            <person name="Challacombe J.F."/>
            <person name="Altherr M.R."/>
            <person name="Bhotika S.S."/>
            <person name="Bruce D."/>
            <person name="Campbell C.S."/>
            <person name="Campbell M.L."/>
            <person name="Chen J."/>
            <person name="Chertkov O."/>
            <person name="Cleland C."/>
            <person name="Dimitrijevic M."/>
            <person name="Doggett N.A."/>
            <person name="Fawcett J.J."/>
            <person name="Glavina T."/>
            <person name="Goodwin L.A."/>
            <person name="Hill K.K."/>
            <person name="Hitchcock P."/>
            <person name="Jackson P.J."/>
            <person name="Keim P."/>
            <person name="Kewalramani A.R."/>
            <person name="Longmire J."/>
            <person name="Lucas S."/>
            <person name="Malfatti S."/>
            <person name="McMurry K."/>
            <person name="Meincke L.J."/>
            <person name="Misra M."/>
            <person name="Moseman B.L."/>
            <person name="Mundt M."/>
            <person name="Munk A.C."/>
            <person name="Okinaka R.T."/>
            <person name="Parson-Quintana B."/>
            <person name="Reilly L.P."/>
            <person name="Richardson P."/>
            <person name="Robinson D.L."/>
            <person name="Rubin E."/>
            <person name="Saunders E."/>
            <person name="Tapia R."/>
            <person name="Tesmer J.G."/>
            <person name="Thayer N."/>
            <person name="Thompson L.S."/>
            <person name="Tice H."/>
            <person name="Ticknor L.O."/>
            <person name="Wills P.L."/>
            <person name="Brettin T.S."/>
            <person name="Gilna P."/>
        </authorList>
    </citation>
    <scope>NUCLEOTIDE SEQUENCE [LARGE SCALE GENOMIC DNA]</scope>
    <source>
        <strain>ZK / E33L</strain>
    </source>
</reference>
<dbReference type="EMBL" id="CP000001">
    <property type="protein sequence ID" value="AAU20005.1"/>
    <property type="molecule type" value="Genomic_DNA"/>
</dbReference>
<dbReference type="RefSeq" id="WP_000344248.1">
    <property type="nucleotide sequence ID" value="NZ_CP009968.1"/>
</dbReference>
<dbReference type="KEGG" id="bcz:BCE33L0230"/>
<dbReference type="PATRIC" id="fig|288681.22.peg.5381"/>
<dbReference type="Proteomes" id="UP000002612">
    <property type="component" value="Chromosome"/>
</dbReference>
<dbReference type="GO" id="GO:0005737">
    <property type="term" value="C:cytoplasm"/>
    <property type="evidence" value="ECO:0007669"/>
    <property type="project" value="UniProtKB-SubCell"/>
</dbReference>
<dbReference type="GO" id="GO:0008270">
    <property type="term" value="F:zinc ion binding"/>
    <property type="evidence" value="ECO:0007669"/>
    <property type="project" value="UniProtKB-UniRule"/>
</dbReference>
<dbReference type="GO" id="GO:0006950">
    <property type="term" value="P:response to stress"/>
    <property type="evidence" value="ECO:0007669"/>
    <property type="project" value="UniProtKB-ARBA"/>
</dbReference>
<dbReference type="HAMAP" id="MF_00745">
    <property type="entry name" value="SprT_like"/>
    <property type="match status" value="1"/>
</dbReference>
<dbReference type="InterPro" id="IPR006640">
    <property type="entry name" value="SprT-like_domain"/>
</dbReference>
<dbReference type="InterPro" id="IPR035240">
    <property type="entry name" value="SprT_Zn_ribbon"/>
</dbReference>
<dbReference type="InterPro" id="IPR023524">
    <property type="entry name" value="Uncharacterised_SprT-like"/>
</dbReference>
<dbReference type="NCBIfam" id="NF003339">
    <property type="entry name" value="PRK04351.1"/>
    <property type="match status" value="1"/>
</dbReference>
<dbReference type="Pfam" id="PF10263">
    <property type="entry name" value="SprT-like"/>
    <property type="match status" value="1"/>
</dbReference>
<dbReference type="Pfam" id="PF17283">
    <property type="entry name" value="Zn_ribbon_SprT"/>
    <property type="match status" value="1"/>
</dbReference>
<dbReference type="SMART" id="SM00731">
    <property type="entry name" value="SprT"/>
    <property type="match status" value="1"/>
</dbReference>
<keyword id="KW-0963">Cytoplasm</keyword>
<keyword id="KW-0479">Metal-binding</keyword>
<keyword id="KW-0862">Zinc</keyword>
<organism>
    <name type="scientific">Bacillus cereus (strain ZK / E33L)</name>
    <dbReference type="NCBI Taxonomy" id="288681"/>
    <lineage>
        <taxon>Bacteria</taxon>
        <taxon>Bacillati</taxon>
        <taxon>Bacillota</taxon>
        <taxon>Bacilli</taxon>
        <taxon>Bacillales</taxon>
        <taxon>Bacillaceae</taxon>
        <taxon>Bacillus</taxon>
        <taxon>Bacillus cereus group</taxon>
    </lineage>
</organism>
<feature type="chain" id="PRO_1000046508" description="Protein SprT-like">
    <location>
        <begin position="1"/>
        <end position="152"/>
    </location>
</feature>
<feature type="domain" description="SprT-like" evidence="1">
    <location>
        <begin position="7"/>
        <end position="148"/>
    </location>
</feature>
<feature type="active site" evidence="1">
    <location>
        <position position="68"/>
    </location>
</feature>
<feature type="binding site" evidence="1">
    <location>
        <position position="67"/>
    </location>
    <ligand>
        <name>Zn(2+)</name>
        <dbReference type="ChEBI" id="CHEBI:29105"/>
    </ligand>
</feature>
<feature type="binding site" evidence="1">
    <location>
        <position position="71"/>
    </location>
    <ligand>
        <name>Zn(2+)</name>
        <dbReference type="ChEBI" id="CHEBI:29105"/>
    </ligand>
</feature>
<sequence length="152" mass="18391">MDEQEIQRLVEEVSLQYFGMPFLHKAMFNSRLRTTGGRYLLNTHNIELNYRYYEMYGKEELVGIVKHELCHYHLHITGRGYKHRDKDFRELLKAVDAPRFCKRMVNAEKEKRVYVYECMECLLQYVRRRQINTKRYVCGKCKGKLNLIKKTS</sequence>